<name>KDSA_BURM7</name>
<accession>A3ML78</accession>
<comment type="catalytic activity">
    <reaction evidence="1">
        <text>D-arabinose 5-phosphate + phosphoenolpyruvate + H2O = 3-deoxy-alpha-D-manno-2-octulosonate-8-phosphate + phosphate</text>
        <dbReference type="Rhea" id="RHEA:14053"/>
        <dbReference type="ChEBI" id="CHEBI:15377"/>
        <dbReference type="ChEBI" id="CHEBI:43474"/>
        <dbReference type="ChEBI" id="CHEBI:57693"/>
        <dbReference type="ChEBI" id="CHEBI:58702"/>
        <dbReference type="ChEBI" id="CHEBI:85985"/>
        <dbReference type="EC" id="2.5.1.55"/>
    </reaction>
</comment>
<comment type="pathway">
    <text evidence="1">Carbohydrate biosynthesis; 3-deoxy-D-manno-octulosonate biosynthesis; 3-deoxy-D-manno-octulosonate from D-ribulose 5-phosphate: step 2/3.</text>
</comment>
<comment type="pathway">
    <text evidence="1">Bacterial outer membrane biogenesis; lipopolysaccharide biosynthesis.</text>
</comment>
<comment type="subcellular location">
    <subcellularLocation>
        <location evidence="1">Cytoplasm</location>
    </subcellularLocation>
</comment>
<comment type="similarity">
    <text evidence="1">Belongs to the KdsA family.</text>
</comment>
<evidence type="ECO:0000255" key="1">
    <source>
        <dbReference type="HAMAP-Rule" id="MF_00056"/>
    </source>
</evidence>
<organism>
    <name type="scientific">Burkholderia mallei (strain NCTC 10247)</name>
    <dbReference type="NCBI Taxonomy" id="320389"/>
    <lineage>
        <taxon>Bacteria</taxon>
        <taxon>Pseudomonadati</taxon>
        <taxon>Pseudomonadota</taxon>
        <taxon>Betaproteobacteria</taxon>
        <taxon>Burkholderiales</taxon>
        <taxon>Burkholderiaceae</taxon>
        <taxon>Burkholderia</taxon>
        <taxon>pseudomallei group</taxon>
    </lineage>
</organism>
<dbReference type="EC" id="2.5.1.55" evidence="1"/>
<dbReference type="EMBL" id="CP000548">
    <property type="protein sequence ID" value="ABO06827.1"/>
    <property type="molecule type" value="Genomic_DNA"/>
</dbReference>
<dbReference type="RefSeq" id="WP_004193658.1">
    <property type="nucleotide sequence ID" value="NZ_CP007802.1"/>
</dbReference>
<dbReference type="SMR" id="A3ML78"/>
<dbReference type="GeneID" id="93060828"/>
<dbReference type="KEGG" id="bmaz:BM44_1680"/>
<dbReference type="KEGG" id="bmn:BMA10247_1467"/>
<dbReference type="PATRIC" id="fig|320389.8.peg.1879"/>
<dbReference type="UniPathway" id="UPA00030"/>
<dbReference type="UniPathway" id="UPA00357">
    <property type="reaction ID" value="UER00474"/>
</dbReference>
<dbReference type="GO" id="GO:0005737">
    <property type="term" value="C:cytoplasm"/>
    <property type="evidence" value="ECO:0007669"/>
    <property type="project" value="UniProtKB-SubCell"/>
</dbReference>
<dbReference type="GO" id="GO:0008676">
    <property type="term" value="F:3-deoxy-8-phosphooctulonate synthase activity"/>
    <property type="evidence" value="ECO:0007669"/>
    <property type="project" value="UniProtKB-UniRule"/>
</dbReference>
<dbReference type="GO" id="GO:0019294">
    <property type="term" value="P:keto-3-deoxy-D-manno-octulosonic acid biosynthetic process"/>
    <property type="evidence" value="ECO:0007669"/>
    <property type="project" value="UniProtKB-UniRule"/>
</dbReference>
<dbReference type="Gene3D" id="3.20.20.70">
    <property type="entry name" value="Aldolase class I"/>
    <property type="match status" value="1"/>
</dbReference>
<dbReference type="HAMAP" id="MF_00056">
    <property type="entry name" value="KDO8P_synth"/>
    <property type="match status" value="1"/>
</dbReference>
<dbReference type="InterPro" id="IPR013785">
    <property type="entry name" value="Aldolase_TIM"/>
</dbReference>
<dbReference type="InterPro" id="IPR006218">
    <property type="entry name" value="DAHP1/KDSA"/>
</dbReference>
<dbReference type="InterPro" id="IPR006269">
    <property type="entry name" value="KDO8P_synthase"/>
</dbReference>
<dbReference type="NCBIfam" id="TIGR01362">
    <property type="entry name" value="KDO8P_synth"/>
    <property type="match status" value="1"/>
</dbReference>
<dbReference type="NCBIfam" id="NF003543">
    <property type="entry name" value="PRK05198.1"/>
    <property type="match status" value="1"/>
</dbReference>
<dbReference type="PANTHER" id="PTHR21057">
    <property type="entry name" value="PHOSPHO-2-DEHYDRO-3-DEOXYHEPTONATE ALDOLASE"/>
    <property type="match status" value="1"/>
</dbReference>
<dbReference type="Pfam" id="PF00793">
    <property type="entry name" value="DAHP_synth_1"/>
    <property type="match status" value="1"/>
</dbReference>
<dbReference type="SUPFAM" id="SSF51569">
    <property type="entry name" value="Aldolase"/>
    <property type="match status" value="1"/>
</dbReference>
<proteinExistence type="inferred from homology"/>
<gene>
    <name evidence="1" type="primary">kdsA</name>
    <name type="ordered locus">BMA10247_1467</name>
</gene>
<reference key="1">
    <citation type="journal article" date="2010" name="Genome Biol. Evol.">
        <title>Continuing evolution of Burkholderia mallei through genome reduction and large-scale rearrangements.</title>
        <authorList>
            <person name="Losada L."/>
            <person name="Ronning C.M."/>
            <person name="DeShazer D."/>
            <person name="Woods D."/>
            <person name="Fedorova N."/>
            <person name="Kim H.S."/>
            <person name="Shabalina S.A."/>
            <person name="Pearson T.R."/>
            <person name="Brinkac L."/>
            <person name="Tan P."/>
            <person name="Nandi T."/>
            <person name="Crabtree J."/>
            <person name="Badger J."/>
            <person name="Beckstrom-Sternberg S."/>
            <person name="Saqib M."/>
            <person name="Schutzer S.E."/>
            <person name="Keim P."/>
            <person name="Nierman W.C."/>
        </authorList>
    </citation>
    <scope>NUCLEOTIDE SEQUENCE [LARGE SCALE GENOMIC DNA]</scope>
    <source>
        <strain>NCTC 10247</strain>
    </source>
</reference>
<feature type="chain" id="PRO_1000003328" description="2-dehydro-3-deoxyphosphooctonate aldolase">
    <location>
        <begin position="1"/>
        <end position="284"/>
    </location>
</feature>
<keyword id="KW-0963">Cytoplasm</keyword>
<keyword id="KW-0448">Lipopolysaccharide biosynthesis</keyword>
<keyword id="KW-0808">Transferase</keyword>
<protein>
    <recommendedName>
        <fullName evidence="1">2-dehydro-3-deoxyphosphooctonate aldolase</fullName>
        <ecNumber evidence="1">2.5.1.55</ecNumber>
    </recommendedName>
    <alternativeName>
        <fullName evidence="1">3-deoxy-D-manno-octulosonic acid 8-phosphate synthase</fullName>
    </alternativeName>
    <alternativeName>
        <fullName evidence="1">KDO-8-phosphate synthase</fullName>
        <shortName evidence="1">KDO 8-P synthase</shortName>
        <shortName evidence="1">KDOPS</shortName>
    </alternativeName>
    <alternativeName>
        <fullName evidence="1">Phospho-2-dehydro-3-deoxyoctonate aldolase</fullName>
    </alternativeName>
</protein>
<sequence>MNLAGFEVGLDKPFFLIAGTCVVESEQMTIDTAGRLKEICATLGVPFIYKSSYDKANRSSGKSFRGLGMDEGLRILAEVKRQLNVPVLTDVHEIDEIAPVAAVVDVLQTPAFLCRQTDFIRACAQSGKPVNIKKGQFLAPHDMKNVIDKARDAARDAGLSEDRFMACERGVSFGYNNLVSDMRSLAIMRETGAPVVFDATHSVQLPGGQGTSSGGQREFVPVLARAALATGVAGLFMETHPNPAEAKSDGPNAVPLGRMAALLETLVTLDRAVKRVPFLENDFN</sequence>